<reference key="1">
    <citation type="submission" date="2007-05" db="EMBL/GenBank/DDBJ databases">
        <title>Complete sequence of chromosome of Staphylococcus aureus subsp. aureus JH9.</title>
        <authorList>
            <consortium name="US DOE Joint Genome Institute"/>
            <person name="Copeland A."/>
            <person name="Lucas S."/>
            <person name="Lapidus A."/>
            <person name="Barry K."/>
            <person name="Detter J.C."/>
            <person name="Glavina del Rio T."/>
            <person name="Hammon N."/>
            <person name="Israni S."/>
            <person name="Pitluck S."/>
            <person name="Chain P."/>
            <person name="Malfatti S."/>
            <person name="Shin M."/>
            <person name="Vergez L."/>
            <person name="Schmutz J."/>
            <person name="Larimer F."/>
            <person name="Land M."/>
            <person name="Hauser L."/>
            <person name="Kyrpides N."/>
            <person name="Kim E."/>
            <person name="Tomasz A."/>
            <person name="Richardson P."/>
        </authorList>
    </citation>
    <scope>NUCLEOTIDE SEQUENCE [LARGE SCALE GENOMIC DNA]</scope>
    <source>
        <strain>JH9</strain>
    </source>
</reference>
<protein>
    <recommendedName>
        <fullName>Putative lipid kinase SaurJH9_0749</fullName>
        <ecNumber>2.7.1.-</ecNumber>
    </recommendedName>
</protein>
<dbReference type="EC" id="2.7.1.-"/>
<dbReference type="EMBL" id="CP000703">
    <property type="protein sequence ID" value="ABQ48552.1"/>
    <property type="molecule type" value="Genomic_DNA"/>
</dbReference>
<dbReference type="RefSeq" id="WP_000429006.1">
    <property type="nucleotide sequence ID" value="NC_009487.1"/>
</dbReference>
<dbReference type="SMR" id="A5IQS9"/>
<dbReference type="KEGG" id="saj:SaurJH9_0749"/>
<dbReference type="HOGENOM" id="CLU_045532_1_0_9"/>
<dbReference type="GO" id="GO:0005886">
    <property type="term" value="C:plasma membrane"/>
    <property type="evidence" value="ECO:0007669"/>
    <property type="project" value="TreeGrafter"/>
</dbReference>
<dbReference type="GO" id="GO:0005524">
    <property type="term" value="F:ATP binding"/>
    <property type="evidence" value="ECO:0007669"/>
    <property type="project" value="UniProtKB-KW"/>
</dbReference>
<dbReference type="GO" id="GO:0004143">
    <property type="term" value="F:ATP-dependent diacylglycerol kinase activity"/>
    <property type="evidence" value="ECO:0007669"/>
    <property type="project" value="TreeGrafter"/>
</dbReference>
<dbReference type="GO" id="GO:0046872">
    <property type="term" value="F:metal ion binding"/>
    <property type="evidence" value="ECO:0007669"/>
    <property type="project" value="UniProtKB-KW"/>
</dbReference>
<dbReference type="GO" id="GO:0008654">
    <property type="term" value="P:phospholipid biosynthetic process"/>
    <property type="evidence" value="ECO:0007669"/>
    <property type="project" value="UniProtKB-KW"/>
</dbReference>
<dbReference type="Gene3D" id="2.60.200.40">
    <property type="match status" value="1"/>
</dbReference>
<dbReference type="Gene3D" id="3.40.50.10330">
    <property type="entry name" value="Probable inorganic polyphosphate/atp-NAD kinase, domain 1"/>
    <property type="match status" value="1"/>
</dbReference>
<dbReference type="InterPro" id="IPR017438">
    <property type="entry name" value="ATP-NAD_kinase_N"/>
</dbReference>
<dbReference type="InterPro" id="IPR005218">
    <property type="entry name" value="Diacylglycerol/lipid_kinase"/>
</dbReference>
<dbReference type="InterPro" id="IPR001206">
    <property type="entry name" value="Diacylglycerol_kinase_cat_dom"/>
</dbReference>
<dbReference type="InterPro" id="IPR050187">
    <property type="entry name" value="Lipid_Phosphate_FormReg"/>
</dbReference>
<dbReference type="InterPro" id="IPR016064">
    <property type="entry name" value="NAD/diacylglycerol_kinase_sf"/>
</dbReference>
<dbReference type="InterPro" id="IPR045540">
    <property type="entry name" value="YegS/DAGK_C"/>
</dbReference>
<dbReference type="NCBIfam" id="TIGR00147">
    <property type="entry name" value="YegS/Rv2252/BmrU family lipid kinase"/>
    <property type="match status" value="1"/>
</dbReference>
<dbReference type="PANTHER" id="PTHR12358:SF106">
    <property type="entry name" value="LIPID KINASE YEGS"/>
    <property type="match status" value="1"/>
</dbReference>
<dbReference type="PANTHER" id="PTHR12358">
    <property type="entry name" value="SPHINGOSINE KINASE"/>
    <property type="match status" value="1"/>
</dbReference>
<dbReference type="Pfam" id="PF00781">
    <property type="entry name" value="DAGK_cat"/>
    <property type="match status" value="1"/>
</dbReference>
<dbReference type="Pfam" id="PF19279">
    <property type="entry name" value="YegS_C"/>
    <property type="match status" value="1"/>
</dbReference>
<dbReference type="SMART" id="SM00046">
    <property type="entry name" value="DAGKc"/>
    <property type="match status" value="1"/>
</dbReference>
<dbReference type="SUPFAM" id="SSF111331">
    <property type="entry name" value="NAD kinase/diacylglycerol kinase-like"/>
    <property type="match status" value="1"/>
</dbReference>
<dbReference type="PROSITE" id="PS50146">
    <property type="entry name" value="DAGK"/>
    <property type="match status" value="1"/>
</dbReference>
<accession>A5IQS9</accession>
<organism>
    <name type="scientific">Staphylococcus aureus (strain JH9)</name>
    <dbReference type="NCBI Taxonomy" id="359786"/>
    <lineage>
        <taxon>Bacteria</taxon>
        <taxon>Bacillati</taxon>
        <taxon>Bacillota</taxon>
        <taxon>Bacilli</taxon>
        <taxon>Bacillales</taxon>
        <taxon>Staphylococcaceae</taxon>
        <taxon>Staphylococcus</taxon>
    </lineage>
</organism>
<sequence>MENKYTHGVLFYHEHSGLKNINQGIGEVTTALSSICKHLSIQLSENEGDIIKYCQEIKTKNYAKDVDILFILGGDGTVNELINGVMSHDLQLPIGILPGGTFNDFTKTLNIAPNHKQASEQMISAQVGTYDVIKINNQYALNFVGLGLIVQNAENVQDGSKDIFGKLSYIGSTVKTLLNPTQFNYQLSIDDKTYSGETTMILTANGPFIGGSRIPLTDLSPQDGELNTFIFNEQSFSILNDIFKKRDSMNWNEITQGIEHIPGKKISLTTDPAMKVDIDGEISLETPIDIEVIPNAIQLLTVNDL</sequence>
<feature type="chain" id="PRO_0000386509" description="Putative lipid kinase SaurJH9_0749">
    <location>
        <begin position="1"/>
        <end position="305"/>
    </location>
</feature>
<feature type="domain" description="DAGKc" evidence="2">
    <location>
        <begin position="3"/>
        <end position="139"/>
    </location>
</feature>
<feature type="active site" description="Proton acceptor" evidence="1">
    <location>
        <position position="281"/>
    </location>
</feature>
<feature type="binding site" evidence="2">
    <location>
        <position position="44"/>
    </location>
    <ligand>
        <name>ATP</name>
        <dbReference type="ChEBI" id="CHEBI:30616"/>
    </ligand>
</feature>
<feature type="binding site" evidence="2">
    <location>
        <begin position="74"/>
        <end position="80"/>
    </location>
    <ligand>
        <name>ATP</name>
        <dbReference type="ChEBI" id="CHEBI:30616"/>
    </ligand>
</feature>
<feature type="binding site" evidence="2">
    <location>
        <position position="101"/>
    </location>
    <ligand>
        <name>ATP</name>
        <dbReference type="ChEBI" id="CHEBI:30616"/>
    </ligand>
</feature>
<feature type="binding site" evidence="1">
    <location>
        <position position="220"/>
    </location>
    <ligand>
        <name>Mg(2+)</name>
        <dbReference type="ChEBI" id="CHEBI:18420"/>
    </ligand>
</feature>
<feature type="binding site" evidence="1">
    <location>
        <position position="223"/>
    </location>
    <ligand>
        <name>Mg(2+)</name>
        <dbReference type="ChEBI" id="CHEBI:18420"/>
    </ligand>
</feature>
<feature type="binding site" evidence="1">
    <location>
        <position position="225"/>
    </location>
    <ligand>
        <name>Mg(2+)</name>
        <dbReference type="ChEBI" id="CHEBI:18420"/>
    </ligand>
</feature>
<keyword id="KW-0067">ATP-binding</keyword>
<keyword id="KW-0418">Kinase</keyword>
<keyword id="KW-0444">Lipid biosynthesis</keyword>
<keyword id="KW-0443">Lipid metabolism</keyword>
<keyword id="KW-0460">Magnesium</keyword>
<keyword id="KW-0479">Metal-binding</keyword>
<keyword id="KW-0547">Nucleotide-binding</keyword>
<keyword id="KW-0594">Phospholipid biosynthesis</keyword>
<keyword id="KW-1208">Phospholipid metabolism</keyword>
<keyword id="KW-0808">Transferase</keyword>
<comment type="function">
    <text evidence="1">May catalyze the ATP-dependent phosphorylation of lipids other than diacylglycerol (DAG).</text>
</comment>
<comment type="cofactor">
    <cofactor evidence="1">
        <name>Mg(2+)</name>
        <dbReference type="ChEBI" id="CHEBI:18420"/>
    </cofactor>
    <text evidence="1">Binds 1 Mg(2+) ion per subunit. This ion appears to have a structural role and is required for catalytic activity.</text>
</comment>
<comment type="similarity">
    <text evidence="3">Belongs to the diacylglycerol/lipid kinase family.</text>
</comment>
<gene>
    <name type="ordered locus">SaurJH9_0749</name>
</gene>
<evidence type="ECO:0000250" key="1"/>
<evidence type="ECO:0000255" key="2">
    <source>
        <dbReference type="PROSITE-ProRule" id="PRU00783"/>
    </source>
</evidence>
<evidence type="ECO:0000305" key="3"/>
<name>Y749_STAA9</name>
<proteinExistence type="inferred from homology"/>